<protein>
    <recommendedName>
        <fullName>Basic phospholipase A2</fullName>
        <shortName evidence="7">blD-PLA2</shortName>
        <shortName>svPLA2</shortName>
        <ecNumber evidence="3">3.1.1.4</ecNumber>
    </recommendedName>
    <alternativeName>
        <fullName>Phosphatidylcholine 2-acylhydrolase</fullName>
    </alternativeName>
</protein>
<sequence>DLWQFGQMILKETGKLPFPYYTTYGCYCGWGGQGQPKDATDRCCFVHDCCYGKLTNCKPKTDRYSYSRENGVIICGEGTPCEKQICECDKAAAVCFRENLRTYKXXYMAYPDVLCKKPAEKC</sequence>
<feature type="chain" id="PRO_0000413006" description="Basic phospholipase A2">
    <location>
        <begin position="1"/>
        <end position="122"/>
    </location>
</feature>
<feature type="active site" evidence="2">
    <location>
        <position position="47"/>
    </location>
</feature>
<feature type="active site" evidence="2">
    <location>
        <position position="89"/>
    </location>
</feature>
<feature type="binding site" evidence="2">
    <location>
        <position position="27"/>
    </location>
    <ligand>
        <name>Ca(2+)</name>
        <dbReference type="ChEBI" id="CHEBI:29108"/>
    </ligand>
</feature>
<feature type="binding site" evidence="2">
    <location>
        <position position="29"/>
    </location>
    <ligand>
        <name>Ca(2+)</name>
        <dbReference type="ChEBI" id="CHEBI:29108"/>
    </ligand>
</feature>
<feature type="binding site" evidence="2">
    <location>
        <position position="31"/>
    </location>
    <ligand>
        <name>Ca(2+)</name>
        <dbReference type="ChEBI" id="CHEBI:29108"/>
    </ligand>
</feature>
<feature type="binding site" evidence="2">
    <location>
        <position position="48"/>
    </location>
    <ligand>
        <name>Ca(2+)</name>
        <dbReference type="ChEBI" id="CHEBI:29108"/>
    </ligand>
</feature>
<feature type="disulfide bond" evidence="2">
    <location>
        <begin position="26"/>
        <end position="115"/>
    </location>
</feature>
<feature type="disulfide bond" evidence="2">
    <location>
        <begin position="28"/>
        <end position="44"/>
    </location>
</feature>
<feature type="disulfide bond" evidence="2">
    <location>
        <begin position="43"/>
        <end position="95"/>
    </location>
</feature>
<feature type="disulfide bond" evidence="2">
    <location>
        <begin position="49"/>
        <end position="122"/>
    </location>
</feature>
<feature type="disulfide bond" evidence="2">
    <location>
        <begin position="50"/>
        <end position="88"/>
    </location>
</feature>
<feature type="disulfide bond" evidence="2">
    <location>
        <begin position="57"/>
        <end position="81"/>
    </location>
</feature>
<feature type="disulfide bond" evidence="2">
    <location>
        <begin position="75"/>
        <end position="86"/>
    </location>
</feature>
<proteinExistence type="evidence at protein level"/>
<keyword id="KW-1203">Blood coagulation cascade inhibiting toxin</keyword>
<keyword id="KW-0106">Calcium</keyword>
<keyword id="KW-0903">Direct protein sequencing</keyword>
<keyword id="KW-1015">Disulfide bond</keyword>
<keyword id="KW-1199">Hemostasis impairing toxin</keyword>
<keyword id="KW-0378">Hydrolase</keyword>
<keyword id="KW-0442">Lipid degradation</keyword>
<keyword id="KW-0443">Lipid metabolism</keyword>
<keyword id="KW-0479">Metal-binding</keyword>
<keyword id="KW-0964">Secreted</keyword>
<keyword id="KW-0800">Toxin</keyword>
<organism>
    <name type="scientific">Bothrops leucurus</name>
    <name type="common">Whitetail lancehead</name>
    <dbReference type="NCBI Taxonomy" id="157295"/>
    <lineage>
        <taxon>Eukaryota</taxon>
        <taxon>Metazoa</taxon>
        <taxon>Chordata</taxon>
        <taxon>Craniata</taxon>
        <taxon>Vertebrata</taxon>
        <taxon>Euteleostomi</taxon>
        <taxon>Lepidosauria</taxon>
        <taxon>Squamata</taxon>
        <taxon>Bifurcata</taxon>
        <taxon>Unidentata</taxon>
        <taxon>Episquamata</taxon>
        <taxon>Toxicofera</taxon>
        <taxon>Serpentes</taxon>
        <taxon>Colubroidea</taxon>
        <taxon>Viperidae</taxon>
        <taxon>Crotalinae</taxon>
        <taxon>Bothrops</taxon>
    </lineage>
</organism>
<reference evidence="8" key="1">
    <citation type="submission" date="2011-06" db="UniProtKB">
        <authorList>
            <person name="Sanchez E.F."/>
        </authorList>
    </citation>
    <scope>PROTEIN SEQUENCE</scope>
    <source>
        <tissue>Venom</tissue>
    </source>
</reference>
<reference evidence="8" key="2">
    <citation type="journal article" date="2007" name="Biochimie">
        <title>Purification and partial characterization of two phospholipases A2 from Bothrops leucurus (white-tailed-jararaca) snake venom.</title>
        <authorList>
            <person name="Higuchi D.A."/>
            <person name="Barbosa C.M."/>
            <person name="Bincoletto C."/>
            <person name="Chagas J.R."/>
            <person name="Magalhaes A."/>
            <person name="Richardson M."/>
            <person name="Sanchez E.F."/>
            <person name="Pesquero J.B."/>
            <person name="Araujo R.C."/>
            <person name="Pesquero J.L."/>
        </authorList>
    </citation>
    <scope>PROTEIN SEQUENCE OF 1-48</scope>
    <scope>FUNCTION</scope>
    <scope>SUBCELLULAR LOCATION</scope>
    <scope>TISSUE SPECIFICITY</scope>
    <source>
        <tissue evidence="6">Venom</tissue>
    </source>
</reference>
<accession>P86974</accession>
<comment type="function">
    <text evidence="6">Snake venom phospholipase A2 (PLA2) that does not inhibit platelet aggregation. Exhibits cytotoxic and anticoagulant activity. Induces Ehrlich tumor growth but not angiogenesis. PLA2 catalyzes the calcium-dependent hydrolysis of the 2-acyl groups in 3-sn-phosphoglycerides.</text>
</comment>
<comment type="catalytic activity">
    <reaction evidence="3 4 5">
        <text>a 1,2-diacyl-sn-glycero-3-phosphocholine + H2O = a 1-acyl-sn-glycero-3-phosphocholine + a fatty acid + H(+)</text>
        <dbReference type="Rhea" id="RHEA:15801"/>
        <dbReference type="ChEBI" id="CHEBI:15377"/>
        <dbReference type="ChEBI" id="CHEBI:15378"/>
        <dbReference type="ChEBI" id="CHEBI:28868"/>
        <dbReference type="ChEBI" id="CHEBI:57643"/>
        <dbReference type="ChEBI" id="CHEBI:58168"/>
        <dbReference type="EC" id="3.1.1.4"/>
    </reaction>
</comment>
<comment type="cofactor">
    <cofactor evidence="1">
        <name>Ca(2+)</name>
        <dbReference type="ChEBI" id="CHEBI:29108"/>
    </cofactor>
    <text evidence="1">Binds 1 Ca(2+) ion.</text>
</comment>
<comment type="subcellular location">
    <subcellularLocation>
        <location evidence="6">Secreted</location>
    </subcellularLocation>
</comment>
<comment type="tissue specificity">
    <text evidence="6">Expressed by the venom gland.</text>
</comment>
<comment type="miscellaneous">
    <text evidence="6">Displays 20 times higher phospholipase activity than blK-PLA2.</text>
</comment>
<comment type="similarity">
    <text evidence="8">Belongs to the phospholipase A2 family. Group II subfamily. D49 sub-subfamily.</text>
</comment>
<evidence type="ECO:0000250" key="1"/>
<evidence type="ECO:0000250" key="2">
    <source>
        <dbReference type="UniProtKB" id="P14418"/>
    </source>
</evidence>
<evidence type="ECO:0000250" key="3">
    <source>
        <dbReference type="UniProtKB" id="P86389"/>
    </source>
</evidence>
<evidence type="ECO:0000255" key="4">
    <source>
        <dbReference type="PROSITE-ProRule" id="PRU10035"/>
    </source>
</evidence>
<evidence type="ECO:0000255" key="5">
    <source>
        <dbReference type="PROSITE-ProRule" id="PRU10036"/>
    </source>
</evidence>
<evidence type="ECO:0000269" key="6">
    <source>
    </source>
</evidence>
<evidence type="ECO:0000303" key="7">
    <source>
    </source>
</evidence>
<evidence type="ECO:0000305" key="8"/>
<dbReference type="EC" id="3.1.1.4" evidence="3"/>
<dbReference type="GO" id="GO:0005576">
    <property type="term" value="C:extracellular region"/>
    <property type="evidence" value="ECO:0007669"/>
    <property type="project" value="UniProtKB-SubCell"/>
</dbReference>
<dbReference type="GO" id="GO:0005509">
    <property type="term" value="F:calcium ion binding"/>
    <property type="evidence" value="ECO:0007669"/>
    <property type="project" value="InterPro"/>
</dbReference>
<dbReference type="GO" id="GO:0047498">
    <property type="term" value="F:calcium-dependent phospholipase A2 activity"/>
    <property type="evidence" value="ECO:0007669"/>
    <property type="project" value="TreeGrafter"/>
</dbReference>
<dbReference type="GO" id="GO:0005543">
    <property type="term" value="F:phospholipid binding"/>
    <property type="evidence" value="ECO:0007669"/>
    <property type="project" value="TreeGrafter"/>
</dbReference>
<dbReference type="GO" id="GO:0090729">
    <property type="term" value="F:toxin activity"/>
    <property type="evidence" value="ECO:0007669"/>
    <property type="project" value="UniProtKB-KW"/>
</dbReference>
<dbReference type="GO" id="GO:0050482">
    <property type="term" value="P:arachidonate secretion"/>
    <property type="evidence" value="ECO:0007669"/>
    <property type="project" value="InterPro"/>
</dbReference>
<dbReference type="GO" id="GO:0016042">
    <property type="term" value="P:lipid catabolic process"/>
    <property type="evidence" value="ECO:0007669"/>
    <property type="project" value="UniProtKB-KW"/>
</dbReference>
<dbReference type="GO" id="GO:0042130">
    <property type="term" value="P:negative regulation of T cell proliferation"/>
    <property type="evidence" value="ECO:0007669"/>
    <property type="project" value="TreeGrafter"/>
</dbReference>
<dbReference type="GO" id="GO:0006644">
    <property type="term" value="P:phospholipid metabolic process"/>
    <property type="evidence" value="ECO:0007669"/>
    <property type="project" value="InterPro"/>
</dbReference>
<dbReference type="CDD" id="cd00125">
    <property type="entry name" value="PLA2c"/>
    <property type="match status" value="1"/>
</dbReference>
<dbReference type="FunFam" id="1.20.90.10:FF:000001">
    <property type="entry name" value="Basic phospholipase A2 homolog"/>
    <property type="match status" value="1"/>
</dbReference>
<dbReference type="Gene3D" id="1.20.90.10">
    <property type="entry name" value="Phospholipase A2 domain"/>
    <property type="match status" value="1"/>
</dbReference>
<dbReference type="InterPro" id="IPR001211">
    <property type="entry name" value="PLipase_A2"/>
</dbReference>
<dbReference type="InterPro" id="IPR033112">
    <property type="entry name" value="PLipase_A2_Asp_AS"/>
</dbReference>
<dbReference type="InterPro" id="IPR016090">
    <property type="entry name" value="PLipase_A2_dom"/>
</dbReference>
<dbReference type="InterPro" id="IPR036444">
    <property type="entry name" value="PLipase_A2_dom_sf"/>
</dbReference>
<dbReference type="InterPro" id="IPR033113">
    <property type="entry name" value="PLipase_A2_His_AS"/>
</dbReference>
<dbReference type="PANTHER" id="PTHR11716">
    <property type="entry name" value="PHOSPHOLIPASE A2 FAMILY MEMBER"/>
    <property type="match status" value="1"/>
</dbReference>
<dbReference type="PANTHER" id="PTHR11716:SF9">
    <property type="entry name" value="PHOSPHOLIPASE A2, MEMBRANE ASSOCIATED"/>
    <property type="match status" value="1"/>
</dbReference>
<dbReference type="Pfam" id="PF00068">
    <property type="entry name" value="Phospholip_A2_1"/>
    <property type="match status" value="1"/>
</dbReference>
<dbReference type="PRINTS" id="PR00389">
    <property type="entry name" value="PHPHLIPASEA2"/>
</dbReference>
<dbReference type="SMART" id="SM00085">
    <property type="entry name" value="PA2c"/>
    <property type="match status" value="1"/>
</dbReference>
<dbReference type="SUPFAM" id="SSF48619">
    <property type="entry name" value="Phospholipase A2, PLA2"/>
    <property type="match status" value="1"/>
</dbReference>
<dbReference type="PROSITE" id="PS00119">
    <property type="entry name" value="PA2_ASP"/>
    <property type="match status" value="1"/>
</dbReference>
<dbReference type="PROSITE" id="PS00118">
    <property type="entry name" value="PA2_HIS"/>
    <property type="match status" value="1"/>
</dbReference>
<name>PA2BD_BOTLC</name>